<reference key="1">
    <citation type="journal article" date="1997" name="Hum. Genet.">
        <title>The human histone gene cluster at the D6S105 locus.</title>
        <authorList>
            <person name="Albig W."/>
            <person name="Doenecke D."/>
        </authorList>
    </citation>
    <scope>NUCLEOTIDE SEQUENCE [GENOMIC DNA]</scope>
</reference>
<reference key="2">
    <citation type="journal article" date="2002" name="Genomics">
        <title>The human and mouse replication-dependent histone genes.</title>
        <authorList>
            <person name="Marzluff W.F."/>
            <person name="Gongidi P."/>
            <person name="Woods K.R."/>
            <person name="Jin J."/>
            <person name="Maltais L.J."/>
        </authorList>
    </citation>
    <scope>NUCLEOTIDE SEQUENCE [GENOMIC DNA]</scope>
</reference>
<reference key="3">
    <citation type="journal article" date="2004" name="Nat. Genet.">
        <title>Complete sequencing and characterization of 21,243 full-length human cDNAs.</title>
        <authorList>
            <person name="Ota T."/>
            <person name="Suzuki Y."/>
            <person name="Nishikawa T."/>
            <person name="Otsuki T."/>
            <person name="Sugiyama T."/>
            <person name="Irie R."/>
            <person name="Wakamatsu A."/>
            <person name="Hayashi K."/>
            <person name="Sato H."/>
            <person name="Nagai K."/>
            <person name="Kimura K."/>
            <person name="Makita H."/>
            <person name="Sekine M."/>
            <person name="Obayashi M."/>
            <person name="Nishi T."/>
            <person name="Shibahara T."/>
            <person name="Tanaka T."/>
            <person name="Ishii S."/>
            <person name="Yamamoto J."/>
            <person name="Saito K."/>
            <person name="Kawai Y."/>
            <person name="Isono Y."/>
            <person name="Nakamura Y."/>
            <person name="Nagahari K."/>
            <person name="Murakami K."/>
            <person name="Yasuda T."/>
            <person name="Iwayanagi T."/>
            <person name="Wagatsuma M."/>
            <person name="Shiratori A."/>
            <person name="Sudo H."/>
            <person name="Hosoiri T."/>
            <person name="Kaku Y."/>
            <person name="Kodaira H."/>
            <person name="Kondo H."/>
            <person name="Sugawara M."/>
            <person name="Takahashi M."/>
            <person name="Kanda K."/>
            <person name="Yokoi T."/>
            <person name="Furuya T."/>
            <person name="Kikkawa E."/>
            <person name="Omura Y."/>
            <person name="Abe K."/>
            <person name="Kamihara K."/>
            <person name="Katsuta N."/>
            <person name="Sato K."/>
            <person name="Tanikawa M."/>
            <person name="Yamazaki M."/>
            <person name="Ninomiya K."/>
            <person name="Ishibashi T."/>
            <person name="Yamashita H."/>
            <person name="Murakawa K."/>
            <person name="Fujimori K."/>
            <person name="Tanai H."/>
            <person name="Kimata M."/>
            <person name="Watanabe M."/>
            <person name="Hiraoka S."/>
            <person name="Chiba Y."/>
            <person name="Ishida S."/>
            <person name="Ono Y."/>
            <person name="Takiguchi S."/>
            <person name="Watanabe S."/>
            <person name="Yosida M."/>
            <person name="Hotuta T."/>
            <person name="Kusano J."/>
            <person name="Kanehori K."/>
            <person name="Takahashi-Fujii A."/>
            <person name="Hara H."/>
            <person name="Tanase T.-O."/>
            <person name="Nomura Y."/>
            <person name="Togiya S."/>
            <person name="Komai F."/>
            <person name="Hara R."/>
            <person name="Takeuchi K."/>
            <person name="Arita M."/>
            <person name="Imose N."/>
            <person name="Musashino K."/>
            <person name="Yuuki H."/>
            <person name="Oshima A."/>
            <person name="Sasaki N."/>
            <person name="Aotsuka S."/>
            <person name="Yoshikawa Y."/>
            <person name="Matsunawa H."/>
            <person name="Ichihara T."/>
            <person name="Shiohata N."/>
            <person name="Sano S."/>
            <person name="Moriya S."/>
            <person name="Momiyama H."/>
            <person name="Satoh N."/>
            <person name="Takami S."/>
            <person name="Terashima Y."/>
            <person name="Suzuki O."/>
            <person name="Nakagawa S."/>
            <person name="Senoh A."/>
            <person name="Mizoguchi H."/>
            <person name="Goto Y."/>
            <person name="Shimizu F."/>
            <person name="Wakebe H."/>
            <person name="Hishigaki H."/>
            <person name="Watanabe T."/>
            <person name="Sugiyama A."/>
            <person name="Takemoto M."/>
            <person name="Kawakami B."/>
            <person name="Yamazaki M."/>
            <person name="Watanabe K."/>
            <person name="Kumagai A."/>
            <person name="Itakura S."/>
            <person name="Fukuzumi Y."/>
            <person name="Fujimori Y."/>
            <person name="Komiyama M."/>
            <person name="Tashiro H."/>
            <person name="Tanigami A."/>
            <person name="Fujiwara T."/>
            <person name="Ono T."/>
            <person name="Yamada K."/>
            <person name="Fujii Y."/>
            <person name="Ozaki K."/>
            <person name="Hirao M."/>
            <person name="Ohmori Y."/>
            <person name="Kawabata A."/>
            <person name="Hikiji T."/>
            <person name="Kobatake N."/>
            <person name="Inagaki H."/>
            <person name="Ikema Y."/>
            <person name="Okamoto S."/>
            <person name="Okitani R."/>
            <person name="Kawakami T."/>
            <person name="Noguchi S."/>
            <person name="Itoh T."/>
            <person name="Shigeta K."/>
            <person name="Senba T."/>
            <person name="Matsumura K."/>
            <person name="Nakajima Y."/>
            <person name="Mizuno T."/>
            <person name="Morinaga M."/>
            <person name="Sasaki M."/>
            <person name="Togashi T."/>
            <person name="Oyama M."/>
            <person name="Hata H."/>
            <person name="Watanabe M."/>
            <person name="Komatsu T."/>
            <person name="Mizushima-Sugano J."/>
            <person name="Satoh T."/>
            <person name="Shirai Y."/>
            <person name="Takahashi Y."/>
            <person name="Nakagawa K."/>
            <person name="Okumura K."/>
            <person name="Nagase T."/>
            <person name="Nomura N."/>
            <person name="Kikuchi H."/>
            <person name="Masuho Y."/>
            <person name="Yamashita R."/>
            <person name="Nakai K."/>
            <person name="Yada T."/>
            <person name="Nakamura Y."/>
            <person name="Ohara O."/>
            <person name="Isogai T."/>
            <person name="Sugano S."/>
        </authorList>
    </citation>
    <scope>NUCLEOTIDE SEQUENCE [LARGE SCALE MRNA]</scope>
    <source>
        <tissue>Uterus</tissue>
    </source>
</reference>
<reference key="4">
    <citation type="journal article" date="2003" name="Nature">
        <title>The DNA sequence and analysis of human chromosome 6.</title>
        <authorList>
            <person name="Mungall A.J."/>
            <person name="Palmer S.A."/>
            <person name="Sims S.K."/>
            <person name="Edwards C.A."/>
            <person name="Ashurst J.L."/>
            <person name="Wilming L."/>
            <person name="Jones M.C."/>
            <person name="Horton R."/>
            <person name="Hunt S.E."/>
            <person name="Scott C.E."/>
            <person name="Gilbert J.G.R."/>
            <person name="Clamp M.E."/>
            <person name="Bethel G."/>
            <person name="Milne S."/>
            <person name="Ainscough R."/>
            <person name="Almeida J.P."/>
            <person name="Ambrose K.D."/>
            <person name="Andrews T.D."/>
            <person name="Ashwell R.I.S."/>
            <person name="Babbage A.K."/>
            <person name="Bagguley C.L."/>
            <person name="Bailey J."/>
            <person name="Banerjee R."/>
            <person name="Barker D.J."/>
            <person name="Barlow K.F."/>
            <person name="Bates K."/>
            <person name="Beare D.M."/>
            <person name="Beasley H."/>
            <person name="Beasley O."/>
            <person name="Bird C.P."/>
            <person name="Blakey S.E."/>
            <person name="Bray-Allen S."/>
            <person name="Brook J."/>
            <person name="Brown A.J."/>
            <person name="Brown J.Y."/>
            <person name="Burford D.C."/>
            <person name="Burrill W."/>
            <person name="Burton J."/>
            <person name="Carder C."/>
            <person name="Carter N.P."/>
            <person name="Chapman J.C."/>
            <person name="Clark S.Y."/>
            <person name="Clark G."/>
            <person name="Clee C.M."/>
            <person name="Clegg S."/>
            <person name="Cobley V."/>
            <person name="Collier R.E."/>
            <person name="Collins J.E."/>
            <person name="Colman L.K."/>
            <person name="Corby N.R."/>
            <person name="Coville G.J."/>
            <person name="Culley K.M."/>
            <person name="Dhami P."/>
            <person name="Davies J."/>
            <person name="Dunn M."/>
            <person name="Earthrowl M.E."/>
            <person name="Ellington A.E."/>
            <person name="Evans K.A."/>
            <person name="Faulkner L."/>
            <person name="Francis M.D."/>
            <person name="Frankish A."/>
            <person name="Frankland J."/>
            <person name="French L."/>
            <person name="Garner P."/>
            <person name="Garnett J."/>
            <person name="Ghori M.J."/>
            <person name="Gilby L.M."/>
            <person name="Gillson C.J."/>
            <person name="Glithero R.J."/>
            <person name="Grafham D.V."/>
            <person name="Grant M."/>
            <person name="Gribble S."/>
            <person name="Griffiths C."/>
            <person name="Griffiths M.N.D."/>
            <person name="Hall R."/>
            <person name="Halls K.S."/>
            <person name="Hammond S."/>
            <person name="Harley J.L."/>
            <person name="Hart E.A."/>
            <person name="Heath P.D."/>
            <person name="Heathcott R."/>
            <person name="Holmes S.J."/>
            <person name="Howden P.J."/>
            <person name="Howe K.L."/>
            <person name="Howell G.R."/>
            <person name="Huckle E."/>
            <person name="Humphray S.J."/>
            <person name="Humphries M.D."/>
            <person name="Hunt A.R."/>
            <person name="Johnson C.M."/>
            <person name="Joy A.A."/>
            <person name="Kay M."/>
            <person name="Keenan S.J."/>
            <person name="Kimberley A.M."/>
            <person name="King A."/>
            <person name="Laird G.K."/>
            <person name="Langford C."/>
            <person name="Lawlor S."/>
            <person name="Leongamornlert D.A."/>
            <person name="Leversha M."/>
            <person name="Lloyd C.R."/>
            <person name="Lloyd D.M."/>
            <person name="Loveland J.E."/>
            <person name="Lovell J."/>
            <person name="Martin S."/>
            <person name="Mashreghi-Mohammadi M."/>
            <person name="Maslen G.L."/>
            <person name="Matthews L."/>
            <person name="McCann O.T."/>
            <person name="McLaren S.J."/>
            <person name="McLay K."/>
            <person name="McMurray A."/>
            <person name="Moore M.J.F."/>
            <person name="Mullikin J.C."/>
            <person name="Niblett D."/>
            <person name="Nickerson T."/>
            <person name="Novik K.L."/>
            <person name="Oliver K."/>
            <person name="Overton-Larty E.K."/>
            <person name="Parker A."/>
            <person name="Patel R."/>
            <person name="Pearce A.V."/>
            <person name="Peck A.I."/>
            <person name="Phillimore B.J.C.T."/>
            <person name="Phillips S."/>
            <person name="Plumb R.W."/>
            <person name="Porter K.M."/>
            <person name="Ramsey Y."/>
            <person name="Ranby S.A."/>
            <person name="Rice C.M."/>
            <person name="Ross M.T."/>
            <person name="Searle S.M."/>
            <person name="Sehra H.K."/>
            <person name="Sheridan E."/>
            <person name="Skuce C.D."/>
            <person name="Smith S."/>
            <person name="Smith M."/>
            <person name="Spraggon L."/>
            <person name="Squares S.L."/>
            <person name="Steward C.A."/>
            <person name="Sycamore N."/>
            <person name="Tamlyn-Hall G."/>
            <person name="Tester J."/>
            <person name="Theaker A.J."/>
            <person name="Thomas D.W."/>
            <person name="Thorpe A."/>
            <person name="Tracey A."/>
            <person name="Tromans A."/>
            <person name="Tubby B."/>
            <person name="Wall M."/>
            <person name="Wallis J.M."/>
            <person name="West A.P."/>
            <person name="White S.S."/>
            <person name="Whitehead S.L."/>
            <person name="Whittaker H."/>
            <person name="Wild A."/>
            <person name="Willey D.J."/>
            <person name="Wilmer T.E."/>
            <person name="Wood J.M."/>
            <person name="Wray P.W."/>
            <person name="Wyatt J.C."/>
            <person name="Young L."/>
            <person name="Younger R.M."/>
            <person name="Bentley D.R."/>
            <person name="Coulson A."/>
            <person name="Durbin R.M."/>
            <person name="Hubbard T."/>
            <person name="Sulston J.E."/>
            <person name="Dunham I."/>
            <person name="Rogers J."/>
            <person name="Beck S."/>
        </authorList>
    </citation>
    <scope>NUCLEOTIDE SEQUENCE [LARGE SCALE GENOMIC DNA]</scope>
</reference>
<reference key="5">
    <citation type="journal article" date="2004" name="Genome Res.">
        <title>The status, quality, and expansion of the NIH full-length cDNA project: the Mammalian Gene Collection (MGC).</title>
        <authorList>
            <consortium name="The MGC Project Team"/>
        </authorList>
    </citation>
    <scope>NUCLEOTIDE SEQUENCE [LARGE SCALE MRNA]</scope>
    <source>
        <tissue>Placenta</tissue>
    </source>
</reference>
<reference key="6">
    <citation type="journal article" date="2006" name="Mol. Cell. Proteomics">
        <title>Quantitative proteomic analysis of post-translational modifications of human histones.</title>
        <authorList>
            <person name="Beck H.C."/>
            <person name="Nielsen E.C."/>
            <person name="Matthiesen R."/>
            <person name="Jensen L.H."/>
            <person name="Sehested M."/>
            <person name="Finn P."/>
            <person name="Grauslund M."/>
            <person name="Hansen A.M."/>
            <person name="Jensen O.N."/>
        </authorList>
    </citation>
    <scope>PROTEIN SEQUENCE OF 7-24</scope>
    <scope>ACETYLATION AT LYS-6; LYS-12; LYS-13; LYS-16; LYS-17 AND LYS-21</scope>
    <scope>METHYLATION AT LYS-47; LYS-58 AND LYS-109</scope>
    <scope>UBIQUITINATION AT LYS-121</scope>
    <scope>IDENTIFICATION BY MASS SPECTROMETRY</scope>
</reference>
<reference key="7">
    <citation type="journal article" date="2003" name="Cell">
        <title>Apoptotic phosphorylation of histone H2B is mediated by mammalian sterile twenty kinase.</title>
        <authorList>
            <person name="Cheung W.L."/>
            <person name="Ajiro K."/>
            <person name="Samejima K."/>
            <person name="Kloc M."/>
            <person name="Cheung P."/>
            <person name="Mizzen C.A."/>
            <person name="Beeser A."/>
            <person name="Etkin L.D."/>
            <person name="Chernoff J."/>
            <person name="Earnshaw W.C."/>
            <person name="Allis C.D."/>
        </authorList>
    </citation>
    <scope>PHOSPHORYLATION AT SER-15</scope>
</reference>
<reference key="8">
    <citation type="journal article" date="2005" name="Mol. Cell">
        <title>Monoubiquitination of human histone H2B: the factors involved and their roles in HOX gene regulation.</title>
        <authorList>
            <person name="Zhu B."/>
            <person name="Zheng Y."/>
            <person name="Pham A.-D."/>
            <person name="Mandal S.S."/>
            <person name="Erdjument-Bromage H."/>
            <person name="Tempst P."/>
            <person name="Reinberg D."/>
        </authorList>
    </citation>
    <scope>UBIQUITINATION AT LYS-121</scope>
</reference>
<reference key="9">
    <citation type="journal article" date="2005" name="Mol. Cell. Biochem.">
        <title>Inhibition of core histones acetylation by carcinogenic nickel(II).</title>
        <authorList>
            <person name="Golebiowski F."/>
            <person name="Kasprzak K.S."/>
        </authorList>
    </citation>
    <scope>ACETYLATION AT LYS-6; LYS-13; LYS-16 AND LYS-21</scope>
</reference>
<reference key="10">
    <citation type="journal article" date="2006" name="Cell">
        <title>Histone H2B monoubiquitination functions cooperatively with FACT to regulate elongation by RNA polymerase II.</title>
        <authorList>
            <person name="Pavri R."/>
            <person name="Zhu B."/>
            <person name="Li G."/>
            <person name="Trojer P."/>
            <person name="Mandal S."/>
            <person name="Shilatifard A."/>
            <person name="Reinberg D."/>
        </authorList>
    </citation>
    <scope>UBIQUITINATION AT LYS-121</scope>
</reference>
<reference key="11">
    <citation type="journal article" date="2006" name="Mol. Cell. Proteomics">
        <title>Characterization of histones H2A and H2B variants and their post-translational modifications by mass spectrometry.</title>
        <authorList>
            <person name="Bonenfant D."/>
            <person name="Coulot M."/>
            <person name="Towbin H."/>
            <person name="Schindler P."/>
            <person name="van Oostrum J."/>
        </authorList>
    </citation>
    <scope>IDENTIFICATION BY MASS SPECTROMETRY [LARGE SCALE ANALYSIS]</scope>
</reference>
<reference key="12">
    <citation type="journal article" date="2009" name="Science">
        <title>Lysine acetylation targets protein complexes and co-regulates major cellular functions.</title>
        <authorList>
            <person name="Choudhary C."/>
            <person name="Kumar C."/>
            <person name="Gnad F."/>
            <person name="Nielsen M.L."/>
            <person name="Rehman M."/>
            <person name="Walther T.C."/>
            <person name="Olsen J.V."/>
            <person name="Mann M."/>
        </authorList>
    </citation>
    <scope>ACETYLATION [LARGE SCALE ANALYSIS] AT LYS-6</scope>
    <scope>IDENTIFICATION BY MASS SPECTROMETRY [LARGE SCALE ANALYSIS]</scope>
</reference>
<reference key="13">
    <citation type="journal article" date="2011" name="Cell">
        <title>Identification of 67 histone marks and histone lysine crotonylation as a new type of histone modification.</title>
        <authorList>
            <person name="Tan M."/>
            <person name="Luo H."/>
            <person name="Lee S."/>
            <person name="Jin F."/>
            <person name="Yang J.S."/>
            <person name="Montellier E."/>
            <person name="Buchou T."/>
            <person name="Cheng Z."/>
            <person name="Rousseaux S."/>
            <person name="Rajagopal N."/>
            <person name="Lu Z."/>
            <person name="Ye Z."/>
            <person name="Zhu Q."/>
            <person name="Wysocka J."/>
            <person name="Ye Y."/>
            <person name="Khochbin S."/>
            <person name="Ren B."/>
            <person name="Zhao Y."/>
        </authorList>
    </citation>
    <scope>CROTONYLATION AT LYS-6; LYS-12; LYS-13; LYS-16; LYS-17; LYS-21; LYS-24 AND LYS-35</scope>
</reference>
<reference key="14">
    <citation type="journal article" date="2011" name="Mol. Cell">
        <title>The RING finger protein MSL2 in the MOF complex is an E3 ubiquitin ligase for H2B K34 and is involved in crosstalk with H3 K4 and K79 methylation.</title>
        <authorList>
            <person name="Wu L."/>
            <person name="Zee B.M."/>
            <person name="Wang Y."/>
            <person name="Garcia B.A."/>
            <person name="Dou Y."/>
        </authorList>
    </citation>
    <scope>UBIQUITINATION AT LYS-35</scope>
</reference>
<reference key="15">
    <citation type="journal article" date="2012" name="Mol. Cell. Proteomics">
        <title>Lysine succinylation and lysine malonylation in histones.</title>
        <authorList>
            <person name="Xie Z."/>
            <person name="Dai J."/>
            <person name="Dai L."/>
            <person name="Tan M."/>
            <person name="Cheng Z."/>
            <person name="Wu Y."/>
            <person name="Boeke J.D."/>
            <person name="Zhao Y."/>
        </authorList>
    </citation>
    <scope>SUCCINYLATION AT LYS-35; LYS-117 AND LYS-121</scope>
    <scope>MALONYLATION AT LYS-117</scope>
</reference>
<reference key="16">
    <citation type="journal article" date="2012" name="Proc. Natl. Acad. Sci. U.S.A.">
        <title>N-terminal acetylome analyses and functional insights of the N-terminal acetyltransferase NatB.</title>
        <authorList>
            <person name="Van Damme P."/>
            <person name="Lasa M."/>
            <person name="Polevoda B."/>
            <person name="Gazquez C."/>
            <person name="Elosegui-Artola A."/>
            <person name="Kim D.S."/>
            <person name="De Juan-Pardo E."/>
            <person name="Demeyer K."/>
            <person name="Hole K."/>
            <person name="Larrea E."/>
            <person name="Timmerman E."/>
            <person name="Prieto J."/>
            <person name="Arnesen T."/>
            <person name="Sherman F."/>
            <person name="Gevaert K."/>
            <person name="Aldabe R."/>
        </authorList>
    </citation>
    <scope>IDENTIFICATION BY MASS SPECTROMETRY [LARGE SCALE ANALYSIS]</scope>
</reference>
<reference key="17">
    <citation type="journal article" date="2013" name="Genes Dev.">
        <title>USP49 deubiquitinates histone H2B and regulates cotranscriptional pre-mRNA splicing.</title>
        <authorList>
            <person name="Zhang Z."/>
            <person name="Jones A."/>
            <person name="Joo H.Y."/>
            <person name="Zhou D."/>
            <person name="Cao Y."/>
            <person name="Chen S."/>
            <person name="Erdjument-Bromage H."/>
            <person name="Renfrow M."/>
            <person name="He H."/>
            <person name="Tempst P."/>
            <person name="Townes T.M."/>
            <person name="Giles K.E."/>
            <person name="Ma L."/>
            <person name="Wang H."/>
        </authorList>
    </citation>
    <scope>UBIQUITINATION</scope>
    <scope>DEUBIQUITINATION BY USP49</scope>
</reference>
<reference key="18">
    <citation type="journal article" date="2014" name="Nat. Chem. Biol.">
        <title>Lysine 2-hydroxyisobutyrylation is a widely distributed active histone mark.</title>
        <authorList>
            <person name="Dai L."/>
            <person name="Peng C."/>
            <person name="Montellier E."/>
            <person name="Lu Z."/>
            <person name="Chen Y."/>
            <person name="Ishii H."/>
            <person name="Debernardi A."/>
            <person name="Buchou T."/>
            <person name="Rousseaux S."/>
            <person name="Jin F."/>
            <person name="Sabari B.R."/>
            <person name="Deng Z."/>
            <person name="Allis C.D."/>
            <person name="Ren B."/>
            <person name="Khochbin S."/>
            <person name="Zhao Y."/>
        </authorList>
    </citation>
    <scope>HYDROXYBUTYRYLATION AT LYS-6; LYS-13; LYS-21; LYS-24; LYS-25; LYS-35; LYS-44; LYS-47; LYS-58; LYS-86; LYS-109; LYS-117 AND LYS-121</scope>
</reference>
<reference key="19">
    <citation type="journal article" date="2016" name="Mol. Cell">
        <title>Dynamic competing histone H4 K5K8 acetylation and butyrylation are hallmarks of highly active gene promoters.</title>
        <authorList>
            <person name="Goudarzi A."/>
            <person name="Zhang D."/>
            <person name="Huang H."/>
            <person name="Barral S."/>
            <person name="Kwon O.K."/>
            <person name="Qi S."/>
            <person name="Tang Z."/>
            <person name="Buchou T."/>
            <person name="Vitte A.L."/>
            <person name="He T."/>
            <person name="Cheng Z."/>
            <person name="Montellier E."/>
            <person name="Gaucher J."/>
            <person name="Curtet S."/>
            <person name="Debernardi A."/>
            <person name="Charbonnier G."/>
            <person name="Puthier D."/>
            <person name="Petosa C."/>
            <person name="Panne D."/>
            <person name="Rousseaux S."/>
            <person name="Roeder R.G."/>
            <person name="Zhao Y."/>
            <person name="Khochbin S."/>
        </authorList>
    </citation>
    <scope>BUTYRYLATION AT LYS-6 AND LYS-21</scope>
</reference>
<reference key="20">
    <citation type="journal article" date="2016" name="Mol. Cell">
        <title>Metabolic regulation of gene expression by histone lysine beta-hydroxybutyrylation.</title>
        <authorList>
            <person name="Xie Z."/>
            <person name="Zhang D."/>
            <person name="Chung D."/>
            <person name="Tang Z."/>
            <person name="Huang H."/>
            <person name="Dai L."/>
            <person name="Qi S."/>
            <person name="Li J."/>
            <person name="Colak G."/>
            <person name="Chen Y."/>
            <person name="Xia C."/>
            <person name="Peng C."/>
            <person name="Ruan H."/>
            <person name="Kirkey M."/>
            <person name="Wang D."/>
            <person name="Jensen L.M."/>
            <person name="Kwon O.K."/>
            <person name="Lee S."/>
            <person name="Pletcher S.D."/>
            <person name="Tan M."/>
            <person name="Lombard D.B."/>
            <person name="White K.P."/>
            <person name="Zhao H."/>
            <person name="Li J."/>
            <person name="Roeder R.G."/>
            <person name="Yang X."/>
            <person name="Zhao Y."/>
        </authorList>
    </citation>
    <scope>HYDROXYBUTYRYLATION AT LYS-6; LYS-12; LYS-17; LYS-21; LYS-35; LYS-86; LYS-117 AND LYS-121</scope>
</reference>
<reference key="21">
    <citation type="journal article" date="2016" name="Nat. Chem. Biol.">
        <title>Serine is a new target residue for endogenous ADP-ribosylation on histones.</title>
        <authorList>
            <person name="Leidecker O."/>
            <person name="Bonfiglio J.J."/>
            <person name="Colby T."/>
            <person name="Zhang Q."/>
            <person name="Atanassov I."/>
            <person name="Zaja R."/>
            <person name="Palazzo L."/>
            <person name="Stockum A."/>
            <person name="Ahel I."/>
            <person name="Matic I."/>
        </authorList>
    </citation>
    <scope>ADP-RIBOSYLATION AT SER-7</scope>
</reference>
<reference key="22">
    <citation type="journal article" date="2017" name="Nat. Struct. Mol. Biol.">
        <title>Site-specific mapping of the human SUMO proteome reveals co-modification with phosphorylation.</title>
        <authorList>
            <person name="Hendriks I.A."/>
            <person name="Lyon D."/>
            <person name="Young C."/>
            <person name="Jensen L.J."/>
            <person name="Vertegaal A.C."/>
            <person name="Nielsen M.L."/>
        </authorList>
    </citation>
    <scope>SUMOYLATION [LARGE SCALE ANALYSIS] AT LYS-6</scope>
    <scope>IDENTIFICATION BY MASS SPECTROMETRY [LARGE SCALE ANALYSIS]</scope>
</reference>
<reference key="23">
    <citation type="journal article" date="2016" name="Nat. Commun.">
        <title>PARP3 is a sensor of nicked nucleosomes and monoribosylates histone H2B(Glu2).</title>
        <authorList>
            <person name="Grundy G.J."/>
            <person name="Polo L.M."/>
            <person name="Zeng Z."/>
            <person name="Rulten S.L."/>
            <person name="Hoch N.C."/>
            <person name="Paomephan P."/>
            <person name="Xu Y."/>
            <person name="Sweet S.M."/>
            <person name="Thorne A.W."/>
            <person name="Oliver A.W."/>
            <person name="Matthews S.J."/>
            <person name="Pearl L.H."/>
            <person name="Caldecott K.W."/>
        </authorList>
    </citation>
    <scope>ADP-RIBOSYLATION AT GLU-3</scope>
</reference>
<reference key="24">
    <citation type="journal article" date="2019" name="Mol. Cell">
        <title>Glutarylation of histone H4 lysine 91 regulates chromatin dynamics.</title>
        <authorList>
            <person name="Bao X."/>
            <person name="Liu Z."/>
            <person name="Zhang W."/>
            <person name="Gladysz K."/>
            <person name="Fung Y.M.E."/>
            <person name="Tian G."/>
            <person name="Xiong Y."/>
            <person name="Wong J.W.H."/>
            <person name="Yuen K.W.Y."/>
            <person name="Li X.D."/>
        </authorList>
    </citation>
    <scope>GLUTARYLATION AT LYS-17; LYS-35; LYS-44; LYS-47; LYS-109; LYS-117 AND LYS-121</scope>
</reference>
<reference key="25">
    <citation type="journal article" date="2019" name="Nature">
        <title>Metabolic regulation of gene expression by histone lactylation.</title>
        <authorList>
            <person name="Zhang D."/>
            <person name="Tang Z."/>
            <person name="Huang H."/>
            <person name="Zhou G."/>
            <person name="Cui C."/>
            <person name="Weng Y."/>
            <person name="Liu W."/>
            <person name="Kim S."/>
            <person name="Lee S."/>
            <person name="Perez-Neut M."/>
            <person name="Ding J."/>
            <person name="Czyz D."/>
            <person name="Hu R."/>
            <person name="Ye Z."/>
            <person name="He M."/>
            <person name="Zheng Y.G."/>
            <person name="Shuman H.A."/>
            <person name="Dai L."/>
            <person name="Ren B."/>
            <person name="Roeder R.G."/>
            <person name="Becker L."/>
            <person name="Zhao Y."/>
        </authorList>
    </citation>
    <scope>LACTYLATION AT LYS-6; LYS-12; LYS-16; LYS-17; LYS-21; LYS-24; LYS-44; LYS-86; LYS-109; LYS-117 AND LYS-121</scope>
</reference>
<reference key="26">
    <citation type="journal article" date="2021" name="Elife">
        <title>Serine ADP-ribosylation marks nucleosomes for ALC1-dependent chromatin remodeling.</title>
        <authorList>
            <person name="Mohapatra J."/>
            <person name="Tashiro K."/>
            <person name="Beckner R.L."/>
            <person name="Sierra J."/>
            <person name="Kilgore J.A."/>
            <person name="Williams N.S."/>
            <person name="Liszczak G."/>
        </authorList>
    </citation>
    <scope>ADP-RIBOSYLATION AT SER-7</scope>
</reference>
<keyword id="KW-0007">Acetylation</keyword>
<keyword id="KW-0013">ADP-ribosylation</keyword>
<keyword id="KW-0158">Chromosome</keyword>
<keyword id="KW-0903">Direct protein sequencing</keyword>
<keyword id="KW-0238">DNA-binding</keyword>
<keyword id="KW-0325">Glycoprotein</keyword>
<keyword id="KW-0379">Hydroxylation</keyword>
<keyword id="KW-1017">Isopeptide bond</keyword>
<keyword id="KW-0488">Methylation</keyword>
<keyword id="KW-0544">Nucleosome core</keyword>
<keyword id="KW-0539">Nucleus</keyword>
<keyword id="KW-0597">Phosphoprotein</keyword>
<keyword id="KW-1267">Proteomics identification</keyword>
<keyword id="KW-1185">Reference proteome</keyword>
<keyword id="KW-0832">Ubl conjugation</keyword>
<sequence>MPELAKSAPAPKKGSKKAVTKAQKKDGKKRKRSRKESYSVYVYKVLKQVHPDTGISSKAMGIMNSFVNDIFERIASEASRLAHYNKRSTITSREIQTAVRLLLPGELAKHAVSEGTKAVTKYTSSK</sequence>
<protein>
    <recommendedName>
        <fullName>Histone H2B type 1-L</fullName>
    </recommendedName>
    <alternativeName>
        <fullName>Histone H2B.c</fullName>
        <shortName>H2B/c</shortName>
    </alternativeName>
</protein>
<organism>
    <name type="scientific">Homo sapiens</name>
    <name type="common">Human</name>
    <dbReference type="NCBI Taxonomy" id="9606"/>
    <lineage>
        <taxon>Eukaryota</taxon>
        <taxon>Metazoa</taxon>
        <taxon>Chordata</taxon>
        <taxon>Craniata</taxon>
        <taxon>Vertebrata</taxon>
        <taxon>Euteleostomi</taxon>
        <taxon>Mammalia</taxon>
        <taxon>Eutheria</taxon>
        <taxon>Euarchontoglires</taxon>
        <taxon>Primates</taxon>
        <taxon>Haplorrhini</taxon>
        <taxon>Catarrhini</taxon>
        <taxon>Hominidae</taxon>
        <taxon>Homo</taxon>
    </lineage>
</organism>
<accession>Q99880</accession>
<accession>B2R5A3</accession>
<accession>Q52LW9</accession>
<proteinExistence type="evidence at protein level"/>
<dbReference type="EMBL" id="Z83740">
    <property type="protein sequence ID" value="CAB06035.1"/>
    <property type="molecule type" value="Genomic_DNA"/>
</dbReference>
<dbReference type="EMBL" id="AF531295">
    <property type="protein sequence ID" value="AAN06695.1"/>
    <property type="molecule type" value="Genomic_DNA"/>
</dbReference>
<dbReference type="EMBL" id="AK312114">
    <property type="protein sequence ID" value="BAG35050.1"/>
    <property type="molecule type" value="mRNA"/>
</dbReference>
<dbReference type="EMBL" id="AL009179">
    <property type="status" value="NOT_ANNOTATED_CDS"/>
    <property type="molecule type" value="Genomic_DNA"/>
</dbReference>
<dbReference type="EMBL" id="BC093759">
    <property type="status" value="NOT_ANNOTATED_CDS"/>
    <property type="molecule type" value="mRNA"/>
</dbReference>
<dbReference type="EMBL" id="BC093761">
    <property type="status" value="NOT_ANNOTATED_CDS"/>
    <property type="molecule type" value="mRNA"/>
</dbReference>
<dbReference type="CCDS" id="CCDS4625.1"/>
<dbReference type="RefSeq" id="NP_003510.1">
    <property type="nucleotide sequence ID" value="NM_003519.4"/>
</dbReference>
<dbReference type="SMR" id="Q99880"/>
<dbReference type="BioGRID" id="113936">
    <property type="interactions" value="218"/>
</dbReference>
<dbReference type="DIP" id="DIP-38154N"/>
<dbReference type="FunCoup" id="Q99880">
    <property type="interactions" value="1193"/>
</dbReference>
<dbReference type="IntAct" id="Q99880">
    <property type="interactions" value="62"/>
</dbReference>
<dbReference type="MINT" id="Q99880"/>
<dbReference type="STRING" id="9606.ENSP00000366618"/>
<dbReference type="GlyCosmos" id="Q99880">
    <property type="glycosylation" value="1 site, No reported glycans"/>
</dbReference>
<dbReference type="GlyGen" id="Q99880">
    <property type="glycosylation" value="2 sites, 1 O-linked glycan (1 site)"/>
</dbReference>
<dbReference type="iPTMnet" id="Q99880"/>
<dbReference type="PhosphoSitePlus" id="Q99880"/>
<dbReference type="SwissPalm" id="Q99880"/>
<dbReference type="BioMuta" id="HIST1H2BL"/>
<dbReference type="DMDM" id="7387743"/>
<dbReference type="jPOST" id="Q99880"/>
<dbReference type="MassIVE" id="Q99880"/>
<dbReference type="PaxDb" id="9606-ENSP00000366618"/>
<dbReference type="PeptideAtlas" id="Q99880"/>
<dbReference type="PRIDE" id="Q99880"/>
<dbReference type="ProteomicsDB" id="78517"/>
<dbReference type="Pumba" id="Q99880"/>
<dbReference type="TopDownProteomics" id="Q99880"/>
<dbReference type="Antibodypedia" id="67730">
    <property type="antibodies" value="55 antibodies from 10 providers"/>
</dbReference>
<dbReference type="DNASU" id="8340"/>
<dbReference type="Ensembl" id="ENST00000377401.4">
    <property type="protein sequence ID" value="ENSP00000366618.2"/>
    <property type="gene ID" value="ENSG00000185130.6"/>
</dbReference>
<dbReference type="GeneID" id="8340"/>
<dbReference type="KEGG" id="hsa:8340"/>
<dbReference type="MANE-Select" id="ENST00000377401.4">
    <property type="protein sequence ID" value="ENSP00000366618.2"/>
    <property type="RefSeq nucleotide sequence ID" value="NM_003519.4"/>
    <property type="RefSeq protein sequence ID" value="NP_003510.1"/>
</dbReference>
<dbReference type="UCSC" id="uc003njl.4">
    <property type="organism name" value="human"/>
</dbReference>
<dbReference type="AGR" id="HGNC:4748"/>
<dbReference type="CTD" id="8340"/>
<dbReference type="DisGeNET" id="8340"/>
<dbReference type="GeneCards" id="H2BC13"/>
<dbReference type="HGNC" id="HGNC:4748">
    <property type="gene designation" value="H2BC13"/>
</dbReference>
<dbReference type="HPA" id="ENSG00000185130">
    <property type="expression patterns" value="Tissue enriched (bone)"/>
</dbReference>
<dbReference type="MIM" id="602800">
    <property type="type" value="gene"/>
</dbReference>
<dbReference type="neXtProt" id="NX_Q99880"/>
<dbReference type="OpenTargets" id="ENSG00000185130"/>
<dbReference type="VEuPathDB" id="HostDB:ENSG00000185130"/>
<dbReference type="eggNOG" id="KOG1744">
    <property type="taxonomic scope" value="Eukaryota"/>
</dbReference>
<dbReference type="GeneTree" id="ENSGT01110000267152"/>
<dbReference type="HOGENOM" id="CLU_075666_2_1_1"/>
<dbReference type="InParanoid" id="Q99880"/>
<dbReference type="OMA" id="YERVFCF"/>
<dbReference type="OrthoDB" id="9537006at2759"/>
<dbReference type="PAN-GO" id="Q99880">
    <property type="GO annotations" value="2 GO annotations based on evolutionary models"/>
</dbReference>
<dbReference type="PhylomeDB" id="Q99880"/>
<dbReference type="TreeFam" id="TF300212"/>
<dbReference type="PathwayCommons" id="Q99880"/>
<dbReference type="Reactome" id="R-HSA-110328">
    <property type="pathway name" value="Recognition and association of DNA glycosylase with site containing an affected pyrimidine"/>
</dbReference>
<dbReference type="Reactome" id="R-HSA-110329">
    <property type="pathway name" value="Cleavage of the damaged pyrimidine"/>
</dbReference>
<dbReference type="Reactome" id="R-HSA-110330">
    <property type="pathway name" value="Recognition and association of DNA glycosylase with site containing an affected purine"/>
</dbReference>
<dbReference type="Reactome" id="R-HSA-110331">
    <property type="pathway name" value="Cleavage of the damaged purine"/>
</dbReference>
<dbReference type="Reactome" id="R-HSA-1221632">
    <property type="pathway name" value="Meiotic synapsis"/>
</dbReference>
<dbReference type="Reactome" id="R-HSA-171306">
    <property type="pathway name" value="Packaging Of Telomere Ends"/>
</dbReference>
<dbReference type="Reactome" id="R-HSA-1912408">
    <property type="pathway name" value="Pre-NOTCH Transcription and Translation"/>
</dbReference>
<dbReference type="Reactome" id="R-HSA-201722">
    <property type="pathway name" value="Formation of the beta-catenin:TCF transactivating complex"/>
</dbReference>
<dbReference type="Reactome" id="R-HSA-212300">
    <property type="pathway name" value="PRC2 methylates histones and DNA"/>
</dbReference>
<dbReference type="Reactome" id="R-HSA-2299718">
    <property type="pathway name" value="Condensation of Prophase Chromosomes"/>
</dbReference>
<dbReference type="Reactome" id="R-HSA-2559580">
    <property type="pathway name" value="Oxidative Stress Induced Senescence"/>
</dbReference>
<dbReference type="Reactome" id="R-HSA-2559582">
    <property type="pathway name" value="Senescence-Associated Secretory Phenotype (SASP)"/>
</dbReference>
<dbReference type="Reactome" id="R-HSA-2559586">
    <property type="pathway name" value="DNA Damage/Telomere Stress Induced Senescence"/>
</dbReference>
<dbReference type="Reactome" id="R-HSA-3214815">
    <property type="pathway name" value="HDACs deacetylate histones"/>
</dbReference>
<dbReference type="Reactome" id="R-HSA-3214847">
    <property type="pathway name" value="HATs acetylate histones"/>
</dbReference>
<dbReference type="Reactome" id="R-HSA-427359">
    <property type="pathway name" value="SIRT1 negatively regulates rRNA expression"/>
</dbReference>
<dbReference type="Reactome" id="R-HSA-427389">
    <property type="pathway name" value="ERCC6 (CSB) and EHMT2 (G9a) positively regulate rRNA expression"/>
</dbReference>
<dbReference type="Reactome" id="R-HSA-427413">
    <property type="pathway name" value="NoRC negatively regulates rRNA expression"/>
</dbReference>
<dbReference type="Reactome" id="R-HSA-5250924">
    <property type="pathway name" value="B-WICH complex positively regulates rRNA expression"/>
</dbReference>
<dbReference type="Reactome" id="R-HSA-5334118">
    <property type="pathway name" value="DNA methylation"/>
</dbReference>
<dbReference type="Reactome" id="R-HSA-5578749">
    <property type="pathway name" value="Transcriptional regulation by small RNAs"/>
</dbReference>
<dbReference type="Reactome" id="R-HSA-5617472">
    <property type="pathway name" value="Activation of anterior HOX genes in hindbrain development during early embryogenesis"/>
</dbReference>
<dbReference type="Reactome" id="R-HSA-5625886">
    <property type="pathway name" value="Activated PKN1 stimulates transcription of AR (androgen receptor) regulated genes KLK2 and KLK3"/>
</dbReference>
<dbReference type="Reactome" id="R-HSA-5689880">
    <property type="pathway name" value="Ub-specific processing proteases"/>
</dbReference>
<dbReference type="Reactome" id="R-HSA-5693565">
    <property type="pathway name" value="Recruitment and ATM-mediated phosphorylation of repair and signaling proteins at DNA double strand breaks"/>
</dbReference>
<dbReference type="Reactome" id="R-HSA-5693571">
    <property type="pathway name" value="Nonhomologous End-Joining (NHEJ)"/>
</dbReference>
<dbReference type="Reactome" id="R-HSA-5693607">
    <property type="pathway name" value="Processing of DNA double-strand break ends"/>
</dbReference>
<dbReference type="Reactome" id="R-HSA-606279">
    <property type="pathway name" value="Deposition of new CENPA-containing nucleosomes at the centromere"/>
</dbReference>
<dbReference type="Reactome" id="R-HSA-68616">
    <property type="pathway name" value="Assembly of the ORC complex at the origin of replication"/>
</dbReference>
<dbReference type="Reactome" id="R-HSA-69473">
    <property type="pathway name" value="G2/M DNA damage checkpoint"/>
</dbReference>
<dbReference type="Reactome" id="R-HSA-73728">
    <property type="pathway name" value="RNA Polymerase I Promoter Opening"/>
</dbReference>
<dbReference type="Reactome" id="R-HSA-73772">
    <property type="pathway name" value="RNA Polymerase I Promoter Escape"/>
</dbReference>
<dbReference type="Reactome" id="R-HSA-8866654">
    <property type="pathway name" value="E3 ubiquitin ligases ubiquitinate target proteins"/>
</dbReference>
<dbReference type="Reactome" id="R-HSA-8936459">
    <property type="pathway name" value="RUNX1 regulates genes involved in megakaryocyte differentiation and platelet function"/>
</dbReference>
<dbReference type="Reactome" id="R-HSA-8939236">
    <property type="pathway name" value="RUNX1 regulates transcription of genes involved in differentiation of HSCs"/>
</dbReference>
<dbReference type="Reactome" id="R-HSA-9018519">
    <property type="pathway name" value="Estrogen-dependent gene expression"/>
</dbReference>
<dbReference type="Reactome" id="R-HSA-912446">
    <property type="pathway name" value="Meiotic recombination"/>
</dbReference>
<dbReference type="Reactome" id="R-HSA-9609690">
    <property type="pathway name" value="HCMV Early Events"/>
</dbReference>
<dbReference type="Reactome" id="R-HSA-9610379">
    <property type="pathway name" value="HCMV Late Events"/>
</dbReference>
<dbReference type="Reactome" id="R-HSA-9616222">
    <property type="pathway name" value="Transcriptional regulation of granulopoiesis"/>
</dbReference>
<dbReference type="Reactome" id="R-HSA-9670095">
    <property type="pathway name" value="Inhibition of DNA recombination at telomere"/>
</dbReference>
<dbReference type="Reactome" id="R-HSA-9710421">
    <property type="pathway name" value="Defective pyroptosis"/>
</dbReference>
<dbReference type="Reactome" id="R-HSA-977225">
    <property type="pathway name" value="Amyloid fiber formation"/>
</dbReference>
<dbReference type="Reactome" id="R-HSA-9821002">
    <property type="pathway name" value="Chromatin modifications during the maternal to zygotic transition (MZT)"/>
</dbReference>
<dbReference type="Reactome" id="R-HSA-9821993">
    <property type="pathway name" value="Replacement of protamines by nucleosomes in the male pronucleus"/>
</dbReference>
<dbReference type="Reactome" id="R-HSA-9841922">
    <property type="pathway name" value="MLL4 and MLL3 complexes regulate expression of PPARG target genes in adipogenesis and hepatic steatosis"/>
</dbReference>
<dbReference type="Reactome" id="R-HSA-9843940">
    <property type="pathway name" value="Regulation of endogenous retroelements by KRAB-ZFP proteins"/>
</dbReference>
<dbReference type="Reactome" id="R-HSA-9843970">
    <property type="pathway name" value="Regulation of endogenous retroelements by the Human Silencing Hub (HUSH) complex"/>
</dbReference>
<dbReference type="Reactome" id="R-HSA-9845323">
    <property type="pathway name" value="Regulation of endogenous retroelements by Piwi-interacting RNAs (piRNAs)"/>
</dbReference>
<dbReference type="SignaLink" id="Q99880"/>
<dbReference type="SIGNOR" id="Q99880"/>
<dbReference type="BioGRID-ORCS" id="8340">
    <property type="hits" value="654 hits in 1076 CRISPR screens"/>
</dbReference>
<dbReference type="CD-CODE" id="91857CE7">
    <property type="entry name" value="Nucleolus"/>
</dbReference>
<dbReference type="GeneWiki" id="HIST1H2BL"/>
<dbReference type="GenomeRNAi" id="8340"/>
<dbReference type="Pharos" id="Q99880">
    <property type="development level" value="Tdark"/>
</dbReference>
<dbReference type="PRO" id="PR:Q99880"/>
<dbReference type="Proteomes" id="UP000005640">
    <property type="component" value="Chromosome 6"/>
</dbReference>
<dbReference type="RNAct" id="Q99880">
    <property type="molecule type" value="protein"/>
</dbReference>
<dbReference type="Bgee" id="ENSG00000185130">
    <property type="expression patterns" value="Expressed in bone marrow cell and 113 other cell types or tissues"/>
</dbReference>
<dbReference type="GO" id="GO:0005829">
    <property type="term" value="C:cytosol"/>
    <property type="evidence" value="ECO:0000314"/>
    <property type="project" value="HPA"/>
</dbReference>
<dbReference type="GO" id="GO:0070062">
    <property type="term" value="C:extracellular exosome"/>
    <property type="evidence" value="ECO:0007005"/>
    <property type="project" value="UniProtKB"/>
</dbReference>
<dbReference type="GO" id="GO:0005654">
    <property type="term" value="C:nucleoplasm"/>
    <property type="evidence" value="ECO:0000314"/>
    <property type="project" value="HPA"/>
</dbReference>
<dbReference type="GO" id="GO:0000786">
    <property type="term" value="C:nucleosome"/>
    <property type="evidence" value="ECO:0000303"/>
    <property type="project" value="UniProtKB"/>
</dbReference>
<dbReference type="GO" id="GO:0005634">
    <property type="term" value="C:nucleus"/>
    <property type="evidence" value="ECO:0000314"/>
    <property type="project" value="UniProtKB"/>
</dbReference>
<dbReference type="GO" id="GO:0003677">
    <property type="term" value="F:DNA binding"/>
    <property type="evidence" value="ECO:0000303"/>
    <property type="project" value="UniProtKB"/>
</dbReference>
<dbReference type="GO" id="GO:0046982">
    <property type="term" value="F:protein heterodimerization activity"/>
    <property type="evidence" value="ECO:0007669"/>
    <property type="project" value="InterPro"/>
</dbReference>
<dbReference type="GO" id="GO:0030527">
    <property type="term" value="F:structural constituent of chromatin"/>
    <property type="evidence" value="ECO:0007669"/>
    <property type="project" value="InterPro"/>
</dbReference>
<dbReference type="GO" id="GO:0006334">
    <property type="term" value="P:nucleosome assembly"/>
    <property type="evidence" value="ECO:0000303"/>
    <property type="project" value="UniProtKB"/>
</dbReference>
<dbReference type="CDD" id="cd22910">
    <property type="entry name" value="HFD_H2B"/>
    <property type="match status" value="1"/>
</dbReference>
<dbReference type="FunFam" id="1.10.20.10:FF:000003">
    <property type="entry name" value="Histone H2B"/>
    <property type="match status" value="1"/>
</dbReference>
<dbReference type="Gene3D" id="1.10.20.10">
    <property type="entry name" value="Histone, subunit A"/>
    <property type="match status" value="1"/>
</dbReference>
<dbReference type="InterPro" id="IPR009072">
    <property type="entry name" value="Histone-fold"/>
</dbReference>
<dbReference type="InterPro" id="IPR007125">
    <property type="entry name" value="Histone_H2A/H2B/H3"/>
</dbReference>
<dbReference type="InterPro" id="IPR000558">
    <property type="entry name" value="Histone_H2B"/>
</dbReference>
<dbReference type="InterPro" id="IPR055333">
    <property type="entry name" value="HISTONE_H2B_site"/>
</dbReference>
<dbReference type="PANTHER" id="PTHR23428">
    <property type="entry name" value="HISTONE H2B"/>
    <property type="match status" value="1"/>
</dbReference>
<dbReference type="Pfam" id="PF00125">
    <property type="entry name" value="Histone"/>
    <property type="match status" value="1"/>
</dbReference>
<dbReference type="PRINTS" id="PR00621">
    <property type="entry name" value="HISTONEH2B"/>
</dbReference>
<dbReference type="SMART" id="SM00427">
    <property type="entry name" value="H2B"/>
    <property type="match status" value="1"/>
</dbReference>
<dbReference type="SUPFAM" id="SSF47113">
    <property type="entry name" value="Histone-fold"/>
    <property type="match status" value="1"/>
</dbReference>
<dbReference type="PROSITE" id="PS00357">
    <property type="entry name" value="HISTONE_H2B"/>
    <property type="match status" value="1"/>
</dbReference>
<gene>
    <name evidence="27" type="primary">H2BC13</name>
    <name evidence="27" type="synonym">H2BFC</name>
    <name evidence="27" type="synonym">HIST1H2BL</name>
</gene>
<comment type="function">
    <text>Core component of nucleosome. Nucleosomes wrap and compact DNA into chromatin, limiting DNA accessibility to the cellular machineries which require DNA as a template. Histones thereby play a central role in transcription regulation, DNA repair, DNA replication and chromosomal stability. DNA accessibility is regulated via a complex set of post-translational modifications of histones, also called histone code, and nucleosome remodeling.</text>
</comment>
<comment type="subunit">
    <text>The nucleosome is a histone octamer containing two molecules each of H2A, H2B, H3 and H4 assembled in one H3-H4 heterotetramer and two H2A-H2B heterodimers. The octamer wraps approximately 147 bp of DNA.</text>
</comment>
<comment type="interaction">
    <interactant intactId="EBI-1237119">
        <id>Q99880</id>
    </interactant>
    <interactant intactId="EBI-297683">
        <id>Q96CW1</id>
        <label>AP2M1</label>
    </interactant>
    <organismsDiffer>false</organismsDiffer>
    <experiments>3</experiments>
</comment>
<comment type="interaction">
    <interactant intactId="EBI-1237119">
        <id>Q99880</id>
    </interactant>
    <interactant intactId="EBI-13318575">
        <id>P0C5Z0</id>
        <label>H2AB3</label>
    </interactant>
    <organismsDiffer>false</organismsDiffer>
    <experiments>3</experiments>
</comment>
<comment type="subcellular location">
    <subcellularLocation>
        <location>Nucleus</location>
    </subcellularLocation>
    <subcellularLocation>
        <location>Chromosome</location>
    </subcellularLocation>
</comment>
<comment type="PTM">
    <text evidence="13">Monoubiquitination at Lys-35 (H2BK34Ub) by the MSL1/MSL2 dimer is required for histone H3 'Lys-4' (H3K4me) and 'Lys-79' (H3K79me) methylation and transcription activation at specific gene loci, such as HOXA9 and MEIS1 loci. Similarly, monoubiquitination at Lys-121 (H2BK120Ub) by the RNF20/40 complex gives a specific tag for epigenetic transcriptional activation and is also prerequisite for histone H3 'Lys-4' and 'Lys-79' methylation. It also functions cooperatively with the FACT dimer to stimulate elongation by RNA polymerase II. H2BK120Ub also acts as a regulator of mRNA splicing: deubiquitination by USP49 is required for efficient cotranscriptional splicing of a large set of exons.</text>
</comment>
<comment type="PTM">
    <text evidence="6 10">Phosphorylation at Ser-37 (H2BS36ph) by AMPK in response to stress promotes transcription (By similarity). Phosphorylated on Ser-15 (H2BS14ph) by STK4/MST1 during apoptosis; which facilitates apoptotic chromatin condensation (PubMed:12757711). Also phosphorylated on Ser-15 in response to DNA double strand breaks (DSBs), and in correlation with somatic hypermutation and immunoglobulin class-switch recombination.</text>
</comment>
<comment type="PTM">
    <text evidence="3">GlcNAcylation at Ser-113 promotes monoubiquitination of Lys-121. It fluctuates in response to extracellular glucose, and associates with transcribed genes (By similarity).</text>
</comment>
<comment type="PTM">
    <text evidence="7 21 22 25">ADP-ribosylated by PARP1 or PARP2 on Ser-7 (H2BS6ADPr) in response to DNA damage (PubMed:27723750, PubMed:34874266). H2BS6ADPr promotes recruitment of CHD1L (PubMed:34874266). Mono-ADP-ribosylated on Glu-3 (H2BE2ADPr) by PARP3 in response to single-strand breaks (PubMed:27530147). Poly ADP-ribosylation on Glu-36 (H2BE35ADPr) by PARP1 regulates adipogenesis: it inhibits phosphorylation at Ser-37 (H2BS36ph), thereby blocking expression of pro-adipogenetic genes (By similarity).</text>
</comment>
<comment type="PTM">
    <text evidence="16">Crotonylation (Kcr) is specifically present in male germ cells and marks testis-specific genes in post-meiotic cells, including X-linked genes that escape sex chromosome inactivation in haploid cells. Crotonylation marks active promoters and enhancers and confers resistance to transcriptional repressors. It is also associated with post-meiotically activated genes on autosomes.</text>
</comment>
<comment type="PTM">
    <text evidence="24">Lactylated in macrophages by EP300/P300 by using lactoyl-CoA directly derived from endogenous or exogenous lactate, leading to stimulates gene transcription.</text>
</comment>
<comment type="similarity">
    <text evidence="26">Belongs to the histone H2B family.</text>
</comment>
<evidence type="ECO:0000250" key="1">
    <source>
        <dbReference type="UniProtKB" id="P23527"/>
    </source>
</evidence>
<evidence type="ECO:0000250" key="2">
    <source>
        <dbReference type="UniProtKB" id="P33778"/>
    </source>
</evidence>
<evidence type="ECO:0000250" key="3">
    <source>
        <dbReference type="UniProtKB" id="P62807"/>
    </source>
</evidence>
<evidence type="ECO:0000250" key="4">
    <source>
        <dbReference type="UniProtKB" id="Q00729"/>
    </source>
</evidence>
<evidence type="ECO:0000250" key="5">
    <source>
        <dbReference type="UniProtKB" id="Q5QNW6"/>
    </source>
</evidence>
<evidence type="ECO:0000250" key="6">
    <source>
        <dbReference type="UniProtKB" id="Q64475"/>
    </source>
</evidence>
<evidence type="ECO:0000250" key="7">
    <source>
        <dbReference type="UniProtKB" id="Q6ZWY9"/>
    </source>
</evidence>
<evidence type="ECO:0000250" key="8">
    <source>
        <dbReference type="UniProtKB" id="Q96A08"/>
    </source>
</evidence>
<evidence type="ECO:0000256" key="9">
    <source>
        <dbReference type="SAM" id="MobiDB-lite"/>
    </source>
</evidence>
<evidence type="ECO:0000269" key="10">
    <source>
    </source>
</evidence>
<evidence type="ECO:0000269" key="11">
    <source>
    </source>
</evidence>
<evidence type="ECO:0000269" key="12">
    <source>
    </source>
</evidence>
<evidence type="ECO:0000269" key="13">
    <source>
    </source>
</evidence>
<evidence type="ECO:0000269" key="14">
    <source>
    </source>
</evidence>
<evidence type="ECO:0000269" key="15">
    <source>
    </source>
</evidence>
<evidence type="ECO:0000269" key="16">
    <source>
    </source>
</evidence>
<evidence type="ECO:0000269" key="17">
    <source>
    </source>
</evidence>
<evidence type="ECO:0000269" key="18">
    <source>
    </source>
</evidence>
<evidence type="ECO:0000269" key="19">
    <source>
    </source>
</evidence>
<evidence type="ECO:0000269" key="20">
    <source>
    </source>
</evidence>
<evidence type="ECO:0000269" key="21">
    <source>
    </source>
</evidence>
<evidence type="ECO:0000269" key="22">
    <source>
    </source>
</evidence>
<evidence type="ECO:0000269" key="23">
    <source>
    </source>
</evidence>
<evidence type="ECO:0000269" key="24">
    <source>
    </source>
</evidence>
<evidence type="ECO:0000269" key="25">
    <source>
    </source>
</evidence>
<evidence type="ECO:0000305" key="26"/>
<evidence type="ECO:0000312" key="27">
    <source>
        <dbReference type="HGNC" id="HGNC:4748"/>
    </source>
</evidence>
<evidence type="ECO:0007744" key="28">
    <source>
    </source>
</evidence>
<evidence type="ECO:0007744" key="29">
    <source>
    </source>
</evidence>
<feature type="initiator methionine" description="Removed" evidence="1">
    <location>
        <position position="1"/>
    </location>
</feature>
<feature type="chain" id="PRO_0000071829" description="Histone H2B type 1-L">
    <location>
        <begin position="2"/>
        <end position="126"/>
    </location>
</feature>
<feature type="region of interest" description="Disordered" evidence="9">
    <location>
        <begin position="1"/>
        <end position="36"/>
    </location>
</feature>
<feature type="compositionally biased region" description="Low complexity" evidence="9">
    <location>
        <begin position="1"/>
        <end position="12"/>
    </location>
</feature>
<feature type="modified residue" description="N-acetylproline" evidence="1">
    <location>
        <position position="2"/>
    </location>
</feature>
<feature type="modified residue" description="ADP-ribosyl glutamic acid" evidence="21">
    <location>
        <position position="3"/>
    </location>
</feature>
<feature type="modified residue" description="N6-(2-hydroxyisobutyryl)lysine; alternate" evidence="18">
    <location>
        <position position="6"/>
    </location>
</feature>
<feature type="modified residue" description="N6-(beta-hydroxybutyryl)lysine; alternate" evidence="20">
    <location>
        <position position="6"/>
    </location>
</feature>
<feature type="modified residue" description="N6-acetyllysine; alternate" evidence="11 13 28">
    <location>
        <position position="6"/>
    </location>
</feature>
<feature type="modified residue" description="N6-butyryllysine; alternate" evidence="19">
    <location>
        <position position="6"/>
    </location>
</feature>
<feature type="modified residue" description="N6-crotonyllysine; alternate" evidence="16">
    <location>
        <position position="6"/>
    </location>
</feature>
<feature type="modified residue" description="N6-lactoyllysine; alternate" evidence="24">
    <location>
        <position position="6"/>
    </location>
</feature>
<feature type="modified residue" description="ADP-ribosylserine" evidence="22 25">
    <location>
        <position position="7"/>
    </location>
</feature>
<feature type="modified residue" description="N6-(beta-hydroxybutyryl)lysine; alternate" evidence="20">
    <location>
        <position position="12"/>
    </location>
</feature>
<feature type="modified residue" description="N6-acetyllysine; alternate" evidence="13">
    <location>
        <position position="12"/>
    </location>
</feature>
<feature type="modified residue" description="N6-crotonyllysine; alternate" evidence="16">
    <location>
        <position position="12"/>
    </location>
</feature>
<feature type="modified residue" description="N6-lactoyllysine; alternate" evidence="24">
    <location>
        <position position="12"/>
    </location>
</feature>
<feature type="modified residue" description="N6-(2-hydroxyisobutyryl)lysine; alternate" evidence="18">
    <location>
        <position position="13"/>
    </location>
</feature>
<feature type="modified residue" description="N6-acetyllysine; alternate" evidence="11 13">
    <location>
        <position position="13"/>
    </location>
</feature>
<feature type="modified residue" description="N6-crotonyllysine; alternate" evidence="16">
    <location>
        <position position="13"/>
    </location>
</feature>
<feature type="modified residue" description="Phosphoserine; by STK4/MST1" evidence="10">
    <location>
        <position position="15"/>
    </location>
</feature>
<feature type="modified residue" description="N6-acetyllysine; alternate" evidence="11 13">
    <location>
        <position position="16"/>
    </location>
</feature>
<feature type="modified residue" description="N6-crotonyllysine; alternate" evidence="16">
    <location>
        <position position="16"/>
    </location>
</feature>
<feature type="modified residue" description="N6-lactoyllysine; alternate" evidence="24">
    <location>
        <position position="16"/>
    </location>
</feature>
<feature type="modified residue" description="N6-(beta-hydroxybutyryl)lysine; alternate" evidence="20">
    <location>
        <position position="17"/>
    </location>
</feature>
<feature type="modified residue" description="N6-acetyllysine; alternate" evidence="13">
    <location>
        <position position="17"/>
    </location>
</feature>
<feature type="modified residue" description="N6-crotonyllysine; alternate" evidence="16">
    <location>
        <position position="17"/>
    </location>
</feature>
<feature type="modified residue" description="N6-glutaryllysine; alternate" evidence="23">
    <location>
        <position position="17"/>
    </location>
</feature>
<feature type="modified residue" description="N6-lactoyllysine; alternate" evidence="24">
    <location>
        <position position="17"/>
    </location>
</feature>
<feature type="modified residue" description="N6-(2-hydroxyisobutyryl)lysine; alternate" evidence="18">
    <location>
        <position position="21"/>
    </location>
</feature>
<feature type="modified residue" description="N6-(beta-hydroxybutyryl)lysine; alternate" evidence="20">
    <location>
        <position position="21"/>
    </location>
</feature>
<feature type="modified residue" description="N6-acetyllysine; alternate" evidence="11 13">
    <location>
        <position position="21"/>
    </location>
</feature>
<feature type="modified residue" description="N6-butyryllysine; alternate" evidence="19">
    <location>
        <position position="21"/>
    </location>
</feature>
<feature type="modified residue" description="N6-crotonyllysine; alternate" evidence="16">
    <location>
        <position position="21"/>
    </location>
</feature>
<feature type="modified residue" description="N6-lactoyllysine; alternate" evidence="24">
    <location>
        <position position="21"/>
    </location>
</feature>
<feature type="modified residue" description="N6-(2-hydroxyisobutyryl)lysine; alternate" evidence="18">
    <location>
        <position position="24"/>
    </location>
</feature>
<feature type="modified residue" description="N6-acetyllysine; alternate" evidence="2">
    <location>
        <position position="24"/>
    </location>
</feature>
<feature type="modified residue" description="N6-crotonyllysine; alternate" evidence="16">
    <location>
        <position position="24"/>
    </location>
</feature>
<feature type="modified residue" description="N6-lactoyllysine; alternate" evidence="24">
    <location>
        <position position="24"/>
    </location>
</feature>
<feature type="modified residue" description="N6-(2-hydroxyisobutyryl)lysine" evidence="18">
    <location>
        <position position="25"/>
    </location>
</feature>
<feature type="modified residue" description="N6-(2-hydroxyisobutyryl)lysine; alternate" evidence="18">
    <location>
        <position position="35"/>
    </location>
</feature>
<feature type="modified residue" description="N6-(beta-hydroxybutyryl)lysine; alternate" evidence="20">
    <location>
        <position position="35"/>
    </location>
</feature>
<feature type="modified residue" description="N6-crotonyllysine; alternate" evidence="16">
    <location>
        <position position="35"/>
    </location>
</feature>
<feature type="modified residue" description="N6-glutaryllysine; alternate" evidence="23">
    <location>
        <position position="35"/>
    </location>
</feature>
<feature type="modified residue" description="N6-succinyllysine; alternate" evidence="17">
    <location>
        <position position="35"/>
    </location>
</feature>
<feature type="modified residue" description="PolyADP-ribosyl glutamic acid" evidence="6">
    <location>
        <position position="36"/>
    </location>
</feature>
<feature type="modified residue" description="Phosphoserine; by AMPK" evidence="6">
    <location>
        <position position="37"/>
    </location>
</feature>
<feature type="modified residue" description="N6-(2-hydroxyisobutyryl)lysine; alternate" evidence="18">
    <location>
        <position position="44"/>
    </location>
</feature>
<feature type="modified residue" description="N6-glutaryllysine; alternate" evidence="23">
    <location>
        <position position="44"/>
    </location>
</feature>
<feature type="modified residue" description="N6-lactoyllysine; alternate" evidence="24">
    <location>
        <position position="44"/>
    </location>
</feature>
<feature type="modified residue" description="N6-(2-hydroxyisobutyryl)lysine; alternate" evidence="18">
    <location>
        <position position="47"/>
    </location>
</feature>
<feature type="modified residue" description="N6-glutaryllysine; alternate" evidence="23">
    <location>
        <position position="47"/>
    </location>
</feature>
<feature type="modified residue" description="N6-methyllysine; alternate" evidence="13">
    <location>
        <position position="47"/>
    </location>
</feature>
<feature type="modified residue" description="N6,N6-dimethyllysine; alternate" evidence="13">
    <location>
        <position position="58"/>
    </location>
</feature>
<feature type="modified residue" description="N6-(2-hydroxyisobutyryl)lysine; alternate" evidence="18">
    <location>
        <position position="58"/>
    </location>
</feature>
<feature type="modified residue" description="Dimethylated arginine" evidence="8">
    <location>
        <position position="80"/>
    </location>
</feature>
<feature type="modified residue" description="N6,N6,N6-trimethyllysine; alternate" evidence="8">
    <location>
        <position position="86"/>
    </location>
</feature>
<feature type="modified residue" description="N6-(2-hydroxyisobutyryl)lysine; alternate" evidence="18">
    <location>
        <position position="86"/>
    </location>
</feature>
<feature type="modified residue" description="N6-(beta-hydroxybutyryl)lysine; alternate" evidence="20">
    <location>
        <position position="86"/>
    </location>
</feature>
<feature type="modified residue" description="N6-acetyllysine; alternate" evidence="8">
    <location>
        <position position="86"/>
    </location>
</feature>
<feature type="modified residue" description="N6-lactoyllysine; alternate" evidence="24">
    <location>
        <position position="86"/>
    </location>
</feature>
<feature type="modified residue" description="Omega-N-methylarginine" evidence="8">
    <location>
        <position position="87"/>
    </location>
</feature>
<feature type="modified residue" description="Omega-N-methylarginine" evidence="8">
    <location>
        <position position="93"/>
    </location>
</feature>
<feature type="modified residue" description="N6-(2-hydroxyisobutyryl)lysine; alternate" evidence="18">
    <location>
        <position position="109"/>
    </location>
</feature>
<feature type="modified residue" description="N6-glutaryllysine; alternate" evidence="23">
    <location>
        <position position="109"/>
    </location>
</feature>
<feature type="modified residue" description="N6-lactoyllysine; alternate" evidence="24">
    <location>
        <position position="109"/>
    </location>
</feature>
<feature type="modified residue" description="N6-methyllysine; alternate" evidence="13">
    <location>
        <position position="109"/>
    </location>
</feature>
<feature type="modified residue" description="Phosphothreonine" evidence="4">
    <location>
        <position position="116"/>
    </location>
</feature>
<feature type="modified residue" description="N6-(2-hydroxyisobutyryl)lysine; alternate" evidence="18">
    <location>
        <position position="117"/>
    </location>
</feature>
<feature type="modified residue" description="N6-(beta-hydroxybutyryl)lysine; alternate" evidence="20">
    <location>
        <position position="117"/>
    </location>
</feature>
<feature type="modified residue" description="N6-glutaryllysine; alternate" evidence="23">
    <location>
        <position position="117"/>
    </location>
</feature>
<feature type="modified residue" description="N6-lactoyllysine; alternate" evidence="24">
    <location>
        <position position="117"/>
    </location>
</feature>
<feature type="modified residue" description="N6-malonyllysine; alternate" evidence="17">
    <location>
        <position position="117"/>
    </location>
</feature>
<feature type="modified residue" description="N6-methylated lysine; alternate" evidence="4">
    <location>
        <position position="117"/>
    </location>
</feature>
<feature type="modified residue" description="N6-succinyllysine; alternate" evidence="17">
    <location>
        <position position="117"/>
    </location>
</feature>
<feature type="modified residue" description="N6-(2-hydroxyisobutyryl)lysine; alternate" evidence="18">
    <location>
        <position position="121"/>
    </location>
</feature>
<feature type="modified residue" description="N6-(beta-hydroxybutyryl)lysine; alternate" evidence="20">
    <location>
        <position position="121"/>
    </location>
</feature>
<feature type="modified residue" description="N6-glutaryllysine; alternate" evidence="23">
    <location>
        <position position="121"/>
    </location>
</feature>
<feature type="modified residue" description="N6-lactoyllysine; alternate" evidence="24">
    <location>
        <position position="121"/>
    </location>
</feature>
<feature type="modified residue" description="N6-succinyllysine; alternate" evidence="17">
    <location>
        <position position="121"/>
    </location>
</feature>
<feature type="glycosylation site" description="O-linked (GlcNAc) serine" evidence="3">
    <location>
        <position position="113"/>
    </location>
</feature>
<feature type="cross-link" description="Glycyl lysine isopeptide (Lys-Gly) (interchain with G-Cter in SUMO2); alternate" evidence="29">
    <location>
        <position position="6"/>
    </location>
</feature>
<feature type="cross-link" description="Glycyl lysine isopeptide (Lys-Gly) (interchain with G-Cter in SUMO2); alternate" evidence="5">
    <location>
        <position position="21"/>
    </location>
</feature>
<feature type="cross-link" description="Glycyl lysine isopeptide (Lys-Gly) (interchain with G-Cter in ubiquitin); alternate" evidence="15">
    <location>
        <position position="35"/>
    </location>
</feature>
<feature type="cross-link" description="Glycyl lysine isopeptide (Lys-Gly) (interchain with G-Cter in ubiquitin); alternate" evidence="12 13 14">
    <location>
        <position position="121"/>
    </location>
</feature>
<feature type="sequence variant" id="VAR_049313" description="In dbSNP:rs200484.">
    <original>L</original>
    <variation>P</variation>
    <location>
        <position position="4"/>
    </location>
</feature>
<name>H2B1L_HUMAN</name>